<comment type="catalytic activity">
    <reaction>
        <text>tRNA(His) + L-histidine + ATP = L-histidyl-tRNA(His) + AMP + diphosphate + H(+)</text>
        <dbReference type="Rhea" id="RHEA:17313"/>
        <dbReference type="Rhea" id="RHEA-COMP:9665"/>
        <dbReference type="Rhea" id="RHEA-COMP:9689"/>
        <dbReference type="ChEBI" id="CHEBI:15378"/>
        <dbReference type="ChEBI" id="CHEBI:30616"/>
        <dbReference type="ChEBI" id="CHEBI:33019"/>
        <dbReference type="ChEBI" id="CHEBI:57595"/>
        <dbReference type="ChEBI" id="CHEBI:78442"/>
        <dbReference type="ChEBI" id="CHEBI:78527"/>
        <dbReference type="ChEBI" id="CHEBI:456215"/>
        <dbReference type="EC" id="6.1.1.21"/>
    </reaction>
</comment>
<comment type="subunit">
    <text evidence="1">Homodimer.</text>
</comment>
<comment type="subcellular location">
    <subcellularLocation>
        <location evidence="1">Cytoplasm</location>
    </subcellularLocation>
</comment>
<comment type="similarity">
    <text evidence="2">Belongs to the class-II aminoacyl-tRNA synthetase family.</text>
</comment>
<protein>
    <recommendedName>
        <fullName>Histidine--tRNA ligase</fullName>
        <ecNumber>6.1.1.21</ecNumber>
    </recommendedName>
    <alternativeName>
        <fullName>Histidyl-tRNA synthetase</fullName>
        <shortName>HisRS</shortName>
    </alternativeName>
</protein>
<evidence type="ECO:0000250" key="1"/>
<evidence type="ECO:0000305" key="2"/>
<dbReference type="EC" id="6.1.1.21"/>
<dbReference type="EMBL" id="AE000520">
    <property type="protein sequence ID" value="AAC65615.1"/>
    <property type="molecule type" value="Genomic_DNA"/>
</dbReference>
<dbReference type="PIR" id="H71298">
    <property type="entry name" value="H71298"/>
</dbReference>
<dbReference type="RefSeq" id="WP_010882086.1">
    <property type="nucleotide sequence ID" value="NC_021490.2"/>
</dbReference>
<dbReference type="SMR" id="O83647"/>
<dbReference type="IntAct" id="O83647">
    <property type="interactions" value="17"/>
</dbReference>
<dbReference type="STRING" id="243276.TP_0641"/>
<dbReference type="EnsemblBacteria" id="AAC65615">
    <property type="protein sequence ID" value="AAC65615"/>
    <property type="gene ID" value="TP_0641"/>
</dbReference>
<dbReference type="GeneID" id="93876410"/>
<dbReference type="KEGG" id="tpa:TP_0641"/>
<dbReference type="KEGG" id="tpw:TPANIC_0641"/>
<dbReference type="eggNOG" id="COG0124">
    <property type="taxonomic scope" value="Bacteria"/>
</dbReference>
<dbReference type="HOGENOM" id="CLU_025113_3_0_12"/>
<dbReference type="OrthoDB" id="9800814at2"/>
<dbReference type="Proteomes" id="UP000000811">
    <property type="component" value="Chromosome"/>
</dbReference>
<dbReference type="GO" id="GO:0005737">
    <property type="term" value="C:cytoplasm"/>
    <property type="evidence" value="ECO:0007669"/>
    <property type="project" value="UniProtKB-SubCell"/>
</dbReference>
<dbReference type="GO" id="GO:0005524">
    <property type="term" value="F:ATP binding"/>
    <property type="evidence" value="ECO:0007669"/>
    <property type="project" value="UniProtKB-UniRule"/>
</dbReference>
<dbReference type="GO" id="GO:0004821">
    <property type="term" value="F:histidine-tRNA ligase activity"/>
    <property type="evidence" value="ECO:0007669"/>
    <property type="project" value="UniProtKB-UniRule"/>
</dbReference>
<dbReference type="GO" id="GO:0006427">
    <property type="term" value="P:histidyl-tRNA aminoacylation"/>
    <property type="evidence" value="ECO:0007669"/>
    <property type="project" value="UniProtKB-UniRule"/>
</dbReference>
<dbReference type="CDD" id="cd00773">
    <property type="entry name" value="HisRS-like_core"/>
    <property type="match status" value="1"/>
</dbReference>
<dbReference type="Gene3D" id="3.30.930.10">
    <property type="entry name" value="Bira Bifunctional Protein, Domain 2"/>
    <property type="match status" value="1"/>
</dbReference>
<dbReference type="HAMAP" id="MF_00127">
    <property type="entry name" value="His_tRNA_synth"/>
    <property type="match status" value="1"/>
</dbReference>
<dbReference type="InterPro" id="IPR006195">
    <property type="entry name" value="aa-tRNA-synth_II"/>
</dbReference>
<dbReference type="InterPro" id="IPR045864">
    <property type="entry name" value="aa-tRNA-synth_II/BPL/LPL"/>
</dbReference>
<dbReference type="InterPro" id="IPR015807">
    <property type="entry name" value="His-tRNA-ligase"/>
</dbReference>
<dbReference type="InterPro" id="IPR041715">
    <property type="entry name" value="HisRS-like_core"/>
</dbReference>
<dbReference type="InterPro" id="IPR004516">
    <property type="entry name" value="HisRS/HisZ"/>
</dbReference>
<dbReference type="NCBIfam" id="TIGR00442">
    <property type="entry name" value="hisS"/>
    <property type="match status" value="1"/>
</dbReference>
<dbReference type="PANTHER" id="PTHR11476:SF7">
    <property type="entry name" value="HISTIDINE--TRNA LIGASE"/>
    <property type="match status" value="1"/>
</dbReference>
<dbReference type="PANTHER" id="PTHR11476">
    <property type="entry name" value="HISTIDYL-TRNA SYNTHETASE"/>
    <property type="match status" value="1"/>
</dbReference>
<dbReference type="Pfam" id="PF13393">
    <property type="entry name" value="tRNA-synt_His"/>
    <property type="match status" value="1"/>
</dbReference>
<dbReference type="PIRSF" id="PIRSF001549">
    <property type="entry name" value="His-tRNA_synth"/>
    <property type="match status" value="1"/>
</dbReference>
<dbReference type="SUPFAM" id="SSF55681">
    <property type="entry name" value="Class II aaRS and biotin synthetases"/>
    <property type="match status" value="1"/>
</dbReference>
<dbReference type="PROSITE" id="PS50862">
    <property type="entry name" value="AA_TRNA_LIGASE_II"/>
    <property type="match status" value="1"/>
</dbReference>
<organism>
    <name type="scientific">Treponema pallidum (strain Nichols)</name>
    <dbReference type="NCBI Taxonomy" id="243276"/>
    <lineage>
        <taxon>Bacteria</taxon>
        <taxon>Pseudomonadati</taxon>
        <taxon>Spirochaetota</taxon>
        <taxon>Spirochaetia</taxon>
        <taxon>Spirochaetales</taxon>
        <taxon>Treponemataceae</taxon>
        <taxon>Treponema</taxon>
    </lineage>
</organism>
<feature type="chain" id="PRO_0000136286" description="Histidine--tRNA ligase">
    <location>
        <begin position="1"/>
        <end position="442"/>
    </location>
</feature>
<name>SYH_TREPA</name>
<proteinExistence type="inferred from homology"/>
<accession>O83647</accession>
<reference key="1">
    <citation type="journal article" date="1998" name="Science">
        <title>Complete genome sequence of Treponema pallidum, the syphilis spirochete.</title>
        <authorList>
            <person name="Fraser C.M."/>
            <person name="Norris S.J."/>
            <person name="Weinstock G.M."/>
            <person name="White O."/>
            <person name="Sutton G.G."/>
            <person name="Dodson R.J."/>
            <person name="Gwinn M.L."/>
            <person name="Hickey E.K."/>
            <person name="Clayton R.A."/>
            <person name="Ketchum K.A."/>
            <person name="Sodergren E."/>
            <person name="Hardham J.M."/>
            <person name="McLeod M.P."/>
            <person name="Salzberg S.L."/>
            <person name="Peterson J.D."/>
            <person name="Khalak H.G."/>
            <person name="Richardson D.L."/>
            <person name="Howell J.K."/>
            <person name="Chidambaram M."/>
            <person name="Utterback T.R."/>
            <person name="McDonald L.A."/>
            <person name="Artiach P."/>
            <person name="Bowman C."/>
            <person name="Cotton M.D."/>
            <person name="Fujii C."/>
            <person name="Garland S.A."/>
            <person name="Hatch B."/>
            <person name="Horst K."/>
            <person name="Roberts K.M."/>
            <person name="Sandusky M."/>
            <person name="Weidman J.F."/>
            <person name="Smith H.O."/>
            <person name="Venter J.C."/>
        </authorList>
    </citation>
    <scope>NUCLEOTIDE SEQUENCE [LARGE SCALE GENOMIC DNA]</scope>
    <source>
        <strain>Nichols</strain>
    </source>
</reference>
<gene>
    <name type="primary">hisS</name>
    <name type="ordered locus">TP_0641</name>
</gene>
<keyword id="KW-0030">Aminoacyl-tRNA synthetase</keyword>
<keyword id="KW-0067">ATP-binding</keyword>
<keyword id="KW-0963">Cytoplasm</keyword>
<keyword id="KW-0436">Ligase</keyword>
<keyword id="KW-0547">Nucleotide-binding</keyword>
<keyword id="KW-0648">Protein biosynthesis</keyword>
<keyword id="KW-1185">Reference proteome</keyword>
<sequence length="442" mass="50199">MRVGSAVSPKVLKGFRDLLPDEEIERALLVEKLTVALRQMGFVPIDTPALEYTEVLLRKSEGDTEKQMFRFVDKGGRDVALRFDLTVPLARFVATHYARLYFPFKRYHFAKVWRGEKPQMGRYREFTQCDFDIVGSDSVCADFEILKSIRHMLYMAGAEHIRIHVAHRGLFDRFLRALSLSDQAEHILRIIDKRAKMAPHVLTAQLESLCDPVRVQKIMTYVSAGEVDGVAPSFEHTLSAIETLTGGVSEESTRLRKIYELLCAVNIQSSYVFDPSITRGFDYYTGMVCETFLTQLPHIGSVCSGGRYDHLTALYMKDAVSGVGASIGLDRLYAAFQQLGMSREHVCFVQALIFCQDSALMDVYQKLCSYFAVQVATEVFPDPRKLSQQYAFAEKKGIRWGIFVEQRNAVVEDCLLVLRDLSTRKDTRLPAHEVRRRMAAEG</sequence>